<evidence type="ECO:0000255" key="1">
    <source>
        <dbReference type="HAMAP-Rule" id="MF_01954"/>
    </source>
</evidence>
<keyword id="KW-0963">Cytoplasm</keyword>
<keyword id="KW-0378">Hydrolase</keyword>
<accession>P69991</accession>
<accession>P52314</accession>
<accession>Q667P9</accession>
<comment type="catalytic activity">
    <reaction evidence="1">
        <text>urea + 2 H2O + H(+) = hydrogencarbonate + 2 NH4(+)</text>
        <dbReference type="Rhea" id="RHEA:20557"/>
        <dbReference type="ChEBI" id="CHEBI:15377"/>
        <dbReference type="ChEBI" id="CHEBI:15378"/>
        <dbReference type="ChEBI" id="CHEBI:16199"/>
        <dbReference type="ChEBI" id="CHEBI:17544"/>
        <dbReference type="ChEBI" id="CHEBI:28938"/>
        <dbReference type="EC" id="3.5.1.5"/>
    </reaction>
</comment>
<comment type="pathway">
    <text evidence="1">Nitrogen metabolism; urea degradation; CO(2) and NH(3) from urea (urease route): step 1/1.</text>
</comment>
<comment type="subunit">
    <text evidence="1">Heterotrimer of UreA (gamma), UreB (beta) and UreC (alpha) subunits. Three heterotrimers associate to form the active enzyme.</text>
</comment>
<comment type="subcellular location">
    <subcellularLocation>
        <location evidence="1">Cytoplasm</location>
    </subcellularLocation>
</comment>
<comment type="similarity">
    <text evidence="1">Belongs to the urease beta subunit family.</text>
</comment>
<protein>
    <recommendedName>
        <fullName evidence="1">Urease subunit beta</fullName>
        <ecNumber evidence="1">3.5.1.5</ecNumber>
    </recommendedName>
    <alternativeName>
        <fullName evidence="1">Urea amidohydrolase subunit beta</fullName>
    </alternativeName>
</protein>
<dbReference type="EC" id="3.5.1.5" evidence="1"/>
<dbReference type="EMBL" id="U40842">
    <property type="protein sequence ID" value="AAA87853.1"/>
    <property type="molecule type" value="Genomic_DNA"/>
</dbReference>
<dbReference type="EMBL" id="BX936398">
    <property type="protein sequence ID" value="CAH22181.1"/>
    <property type="molecule type" value="Genomic_DNA"/>
</dbReference>
<dbReference type="RefSeq" id="WP_002212228.1">
    <property type="nucleotide sequence ID" value="NZ_CP009712.1"/>
</dbReference>
<dbReference type="SMR" id="P69991"/>
<dbReference type="GeneID" id="57976028"/>
<dbReference type="KEGG" id="ypo:BZ17_3685"/>
<dbReference type="KEGG" id="yps:YPTB2943"/>
<dbReference type="PATRIC" id="fig|273123.14.peg.3863"/>
<dbReference type="UniPathway" id="UPA00258">
    <property type="reaction ID" value="UER00370"/>
</dbReference>
<dbReference type="Proteomes" id="UP000001011">
    <property type="component" value="Chromosome"/>
</dbReference>
<dbReference type="GO" id="GO:0035550">
    <property type="term" value="C:urease complex"/>
    <property type="evidence" value="ECO:0007669"/>
    <property type="project" value="InterPro"/>
</dbReference>
<dbReference type="GO" id="GO:0009039">
    <property type="term" value="F:urease activity"/>
    <property type="evidence" value="ECO:0007669"/>
    <property type="project" value="UniProtKB-UniRule"/>
</dbReference>
<dbReference type="GO" id="GO:0043419">
    <property type="term" value="P:urea catabolic process"/>
    <property type="evidence" value="ECO:0007669"/>
    <property type="project" value="UniProtKB-UniRule"/>
</dbReference>
<dbReference type="CDD" id="cd00407">
    <property type="entry name" value="Urease_beta"/>
    <property type="match status" value="1"/>
</dbReference>
<dbReference type="Gene3D" id="2.10.150.10">
    <property type="entry name" value="Urease, beta subunit"/>
    <property type="match status" value="1"/>
</dbReference>
<dbReference type="HAMAP" id="MF_01954">
    <property type="entry name" value="Urease_beta"/>
    <property type="match status" value="1"/>
</dbReference>
<dbReference type="InterPro" id="IPR002019">
    <property type="entry name" value="Urease_beta-like"/>
</dbReference>
<dbReference type="InterPro" id="IPR036461">
    <property type="entry name" value="Urease_betasu_sf"/>
</dbReference>
<dbReference type="InterPro" id="IPR050069">
    <property type="entry name" value="Urease_subunit"/>
</dbReference>
<dbReference type="NCBIfam" id="NF009682">
    <property type="entry name" value="PRK13203.1"/>
    <property type="match status" value="1"/>
</dbReference>
<dbReference type="NCBIfam" id="TIGR00192">
    <property type="entry name" value="urease_beta"/>
    <property type="match status" value="1"/>
</dbReference>
<dbReference type="PANTHER" id="PTHR33569">
    <property type="entry name" value="UREASE"/>
    <property type="match status" value="1"/>
</dbReference>
<dbReference type="PANTHER" id="PTHR33569:SF1">
    <property type="entry name" value="UREASE"/>
    <property type="match status" value="1"/>
</dbReference>
<dbReference type="Pfam" id="PF00699">
    <property type="entry name" value="Urease_beta"/>
    <property type="match status" value="1"/>
</dbReference>
<dbReference type="SUPFAM" id="SSF51278">
    <property type="entry name" value="Urease, beta-subunit"/>
    <property type="match status" value="1"/>
</dbReference>
<proteinExistence type="inferred from homology"/>
<organism>
    <name type="scientific">Yersinia pseudotuberculosis serotype I (strain IP32953)</name>
    <dbReference type="NCBI Taxonomy" id="273123"/>
    <lineage>
        <taxon>Bacteria</taxon>
        <taxon>Pseudomonadati</taxon>
        <taxon>Pseudomonadota</taxon>
        <taxon>Gammaproteobacteria</taxon>
        <taxon>Enterobacterales</taxon>
        <taxon>Yersiniaceae</taxon>
        <taxon>Yersinia</taxon>
    </lineage>
</organism>
<gene>
    <name evidence="1" type="primary">ureB</name>
    <name type="synonym">yeuB</name>
    <name type="ordered locus">YPTB2943</name>
</gene>
<reference key="1">
    <citation type="journal article" date="1997" name="Infect. Immun.">
        <title>Urease is not involved in the virulence of Yersinia pseudotuberculosis in mice.</title>
        <authorList>
            <person name="Riot B."/>
            <person name="Berche P."/>
            <person name="Simonet M."/>
        </authorList>
    </citation>
    <scope>NUCLEOTIDE SEQUENCE [GENOMIC DNA]</scope>
    <source>
        <strain>IP 2777</strain>
    </source>
</reference>
<reference key="2">
    <citation type="journal article" date="2004" name="Proc. Natl. Acad. Sci. U.S.A.">
        <title>Insights into the evolution of Yersinia pestis through whole-genome comparison with Yersinia pseudotuberculosis.</title>
        <authorList>
            <person name="Chain P.S.G."/>
            <person name="Carniel E."/>
            <person name="Larimer F.W."/>
            <person name="Lamerdin J."/>
            <person name="Stoutland P.O."/>
            <person name="Regala W.M."/>
            <person name="Georgescu A.M."/>
            <person name="Vergez L.M."/>
            <person name="Land M.L."/>
            <person name="Motin V.L."/>
            <person name="Brubaker R.R."/>
            <person name="Fowler J."/>
            <person name="Hinnebusch J."/>
            <person name="Marceau M."/>
            <person name="Medigue C."/>
            <person name="Simonet M."/>
            <person name="Chenal-Francisque V."/>
            <person name="Souza B."/>
            <person name="Dacheux D."/>
            <person name="Elliott J.M."/>
            <person name="Derbise A."/>
            <person name="Hauser L.J."/>
            <person name="Garcia E."/>
        </authorList>
    </citation>
    <scope>NUCLEOTIDE SEQUENCE [LARGE SCALE GENOMIC DNA]</scope>
    <source>
        <strain>IP32953</strain>
    </source>
</reference>
<name>URE2_YERPS</name>
<feature type="chain" id="PRO_0000067600" description="Urease subunit beta">
    <location>
        <begin position="1"/>
        <end position="144"/>
    </location>
</feature>
<sequence>MSAKKSTKDSKEQNTPLGGLVLAETPITFNENKPVTKVKVRNTGDRPIQVGSHFHFFEVNRALEFDRAAAYGKRLNISSTTAIRFEPGDETEVPLIPFGGKQTLYGFNNLVDGWTGEGVVPNSERPDKLAAIRLAAERGFKSSK</sequence>